<protein>
    <recommendedName>
        <fullName evidence="1">YcgL domain-containing protein CGSHiEE_04830</fullName>
    </recommendedName>
</protein>
<evidence type="ECO:0000255" key="1">
    <source>
        <dbReference type="HAMAP-Rule" id="MF_01866"/>
    </source>
</evidence>
<proteinExistence type="inferred from homology"/>
<name>Y4830_HAEIE</name>
<dbReference type="EMBL" id="CP000671">
    <property type="protein sequence ID" value="ABQ98359.1"/>
    <property type="molecule type" value="Genomic_DNA"/>
</dbReference>
<dbReference type="SMR" id="A5UC58"/>
<dbReference type="KEGG" id="hip:CGSHiEE_04830"/>
<dbReference type="HOGENOM" id="CLU_155118_1_0_6"/>
<dbReference type="Gene3D" id="3.10.510.20">
    <property type="entry name" value="YcgL domain"/>
    <property type="match status" value="1"/>
</dbReference>
<dbReference type="HAMAP" id="MF_01866">
    <property type="entry name" value="UPF0745"/>
    <property type="match status" value="1"/>
</dbReference>
<dbReference type="InterPro" id="IPR038068">
    <property type="entry name" value="YcgL-like_sf"/>
</dbReference>
<dbReference type="InterPro" id="IPR027354">
    <property type="entry name" value="YcgL_dom"/>
</dbReference>
<dbReference type="PANTHER" id="PTHR38109">
    <property type="entry name" value="PROTEIN YCGL"/>
    <property type="match status" value="1"/>
</dbReference>
<dbReference type="PANTHER" id="PTHR38109:SF1">
    <property type="entry name" value="PROTEIN YCGL"/>
    <property type="match status" value="1"/>
</dbReference>
<dbReference type="Pfam" id="PF05166">
    <property type="entry name" value="YcgL"/>
    <property type="match status" value="1"/>
</dbReference>
<dbReference type="SUPFAM" id="SSF160191">
    <property type="entry name" value="YcgL-like"/>
    <property type="match status" value="1"/>
</dbReference>
<dbReference type="PROSITE" id="PS51648">
    <property type="entry name" value="YCGL"/>
    <property type="match status" value="1"/>
</dbReference>
<gene>
    <name type="ordered locus">CGSHiEE_04830</name>
</gene>
<reference key="1">
    <citation type="journal article" date="2007" name="Genome Biol.">
        <title>Characterization and modeling of the Haemophilus influenzae core and supragenomes based on the complete genomic sequences of Rd and 12 clinical nontypeable strains.</title>
        <authorList>
            <person name="Hogg J.S."/>
            <person name="Hu F.Z."/>
            <person name="Janto B."/>
            <person name="Boissy R."/>
            <person name="Hayes J."/>
            <person name="Keefe R."/>
            <person name="Post J.C."/>
            <person name="Ehrlich G.D."/>
        </authorList>
    </citation>
    <scope>NUCLEOTIDE SEQUENCE [LARGE SCALE GENOMIC DNA]</scope>
    <source>
        <strain>PittEE</strain>
    </source>
</reference>
<accession>A5UC58</accession>
<feature type="chain" id="PRO_0000375309" description="YcgL domain-containing protein CGSHiEE_04830">
    <location>
        <begin position="1"/>
        <end position="88"/>
    </location>
</feature>
<feature type="domain" description="YcgL" evidence="1">
    <location>
        <begin position="1"/>
        <end position="85"/>
    </location>
</feature>
<organism>
    <name type="scientific">Haemophilus influenzae (strain PittEE)</name>
    <dbReference type="NCBI Taxonomy" id="374930"/>
    <lineage>
        <taxon>Bacteria</taxon>
        <taxon>Pseudomonadati</taxon>
        <taxon>Pseudomonadota</taxon>
        <taxon>Gammaproteobacteria</taxon>
        <taxon>Pasteurellales</taxon>
        <taxon>Pasteurellaceae</taxon>
        <taxon>Haemophilus</taxon>
    </lineage>
</organism>
<sequence length="88" mass="10138">MLCAIYKSKKKLGSYLYVANREDFSLVPSVLLEHFGKPELVMMFNLLGRKALYNVDCNEVLETIKRQGFYLQIAKQDDGLFNSLSEIK</sequence>